<comment type="function">
    <text evidence="1">Assembles around the rod to form the L-ring and probably protects the motor/basal body from shearing forces during rotation.</text>
</comment>
<comment type="subunit">
    <text evidence="1">The basal body constitutes a major portion of the flagellar organelle and consists of four rings (L,P,S, and M) mounted on a central rod.</text>
</comment>
<comment type="subcellular location">
    <subcellularLocation>
        <location evidence="1">Cell outer membrane</location>
        <topology evidence="1">Lipid-anchor</topology>
    </subcellularLocation>
    <subcellularLocation>
        <location evidence="1">Bacterial flagellum basal body</location>
    </subcellularLocation>
</comment>
<comment type="similarity">
    <text evidence="1">Belongs to the FlgH family.</text>
</comment>
<name>FLGH2_YERPS</name>
<sequence length="221" mass="24025">MKRFLILTPMVLALCGCESPALLVQKDDAEFAPPANLVQPATVTEGGGLFQPAYNWSLLQDRRAYRIGDILTVILDESTQSSKQAKTNFGKKNDMSLGVPEVLGKKLNKFGGSISGKRDFDGSATSAQQNMLRGSITVAVHQVLPNGVLVIRGEKWLTLNQGDEYMRVTGLVRADDVARDNSVSSQRIANARISYAGRGALSDANSAGWLTRFFNHPLFPI</sequence>
<dbReference type="EMBL" id="BX936398">
    <property type="protein sequence ID" value="CAH22572.1"/>
    <property type="molecule type" value="Genomic_DNA"/>
</dbReference>
<dbReference type="RefSeq" id="WP_011193059.1">
    <property type="nucleotide sequence ID" value="NC_006155.1"/>
</dbReference>
<dbReference type="SMR" id="Q666C4"/>
<dbReference type="GeneID" id="96662776"/>
<dbReference type="KEGG" id="yps:YPTB3334"/>
<dbReference type="Proteomes" id="UP000001011">
    <property type="component" value="Chromosome"/>
</dbReference>
<dbReference type="GO" id="GO:0009427">
    <property type="term" value="C:bacterial-type flagellum basal body, distal rod, L ring"/>
    <property type="evidence" value="ECO:0007669"/>
    <property type="project" value="InterPro"/>
</dbReference>
<dbReference type="GO" id="GO:0009279">
    <property type="term" value="C:cell outer membrane"/>
    <property type="evidence" value="ECO:0007669"/>
    <property type="project" value="UniProtKB-SubCell"/>
</dbReference>
<dbReference type="GO" id="GO:0003774">
    <property type="term" value="F:cytoskeletal motor activity"/>
    <property type="evidence" value="ECO:0007669"/>
    <property type="project" value="InterPro"/>
</dbReference>
<dbReference type="GO" id="GO:0071973">
    <property type="term" value="P:bacterial-type flagellum-dependent cell motility"/>
    <property type="evidence" value="ECO:0007669"/>
    <property type="project" value="InterPro"/>
</dbReference>
<dbReference type="HAMAP" id="MF_00415">
    <property type="entry name" value="FlgH"/>
    <property type="match status" value="1"/>
</dbReference>
<dbReference type="InterPro" id="IPR000527">
    <property type="entry name" value="Flag_Lring"/>
</dbReference>
<dbReference type="NCBIfam" id="NF001304">
    <property type="entry name" value="PRK00249.1-4"/>
    <property type="match status" value="1"/>
</dbReference>
<dbReference type="NCBIfam" id="NF009072">
    <property type="entry name" value="PRK12407.1"/>
    <property type="match status" value="1"/>
</dbReference>
<dbReference type="PANTHER" id="PTHR34933">
    <property type="entry name" value="FLAGELLAR L-RING PROTEIN"/>
    <property type="match status" value="1"/>
</dbReference>
<dbReference type="PANTHER" id="PTHR34933:SF1">
    <property type="entry name" value="FLAGELLAR L-RING PROTEIN"/>
    <property type="match status" value="1"/>
</dbReference>
<dbReference type="Pfam" id="PF02107">
    <property type="entry name" value="FlgH"/>
    <property type="match status" value="1"/>
</dbReference>
<dbReference type="PRINTS" id="PR01008">
    <property type="entry name" value="FLGLRINGFLGH"/>
</dbReference>
<dbReference type="PROSITE" id="PS51257">
    <property type="entry name" value="PROKAR_LIPOPROTEIN"/>
    <property type="match status" value="1"/>
</dbReference>
<keyword id="KW-0975">Bacterial flagellum</keyword>
<keyword id="KW-0998">Cell outer membrane</keyword>
<keyword id="KW-0449">Lipoprotein</keyword>
<keyword id="KW-0472">Membrane</keyword>
<keyword id="KW-0564">Palmitate</keyword>
<keyword id="KW-0732">Signal</keyword>
<reference key="1">
    <citation type="journal article" date="2004" name="Proc. Natl. Acad. Sci. U.S.A.">
        <title>Insights into the evolution of Yersinia pestis through whole-genome comparison with Yersinia pseudotuberculosis.</title>
        <authorList>
            <person name="Chain P.S.G."/>
            <person name="Carniel E."/>
            <person name="Larimer F.W."/>
            <person name="Lamerdin J."/>
            <person name="Stoutland P.O."/>
            <person name="Regala W.M."/>
            <person name="Georgescu A.M."/>
            <person name="Vergez L.M."/>
            <person name="Land M.L."/>
            <person name="Motin V.L."/>
            <person name="Brubaker R.R."/>
            <person name="Fowler J."/>
            <person name="Hinnebusch J."/>
            <person name="Marceau M."/>
            <person name="Medigue C."/>
            <person name="Simonet M."/>
            <person name="Chenal-Francisque V."/>
            <person name="Souza B."/>
            <person name="Dacheux D."/>
            <person name="Elliott J.M."/>
            <person name="Derbise A."/>
            <person name="Hauser L.J."/>
            <person name="Garcia E."/>
        </authorList>
    </citation>
    <scope>NUCLEOTIDE SEQUENCE [LARGE SCALE GENOMIC DNA]</scope>
    <source>
        <strain>IP32953</strain>
    </source>
</reference>
<feature type="signal peptide" evidence="1">
    <location>
        <begin position="1"/>
        <end position="16"/>
    </location>
</feature>
<feature type="chain" id="PRO_0000009490" description="Flagellar L-ring protein 2">
    <location>
        <begin position="17"/>
        <end position="221"/>
    </location>
</feature>
<feature type="lipid moiety-binding region" description="N-palmitoyl cysteine" evidence="1">
    <location>
        <position position="17"/>
    </location>
</feature>
<feature type="lipid moiety-binding region" description="S-diacylglycerol cysteine" evidence="1">
    <location>
        <position position="17"/>
    </location>
</feature>
<protein>
    <recommendedName>
        <fullName evidence="1">Flagellar L-ring protein 2</fullName>
    </recommendedName>
    <alternativeName>
        <fullName evidence="1">Basal body L-ring protein 2</fullName>
    </alternativeName>
</protein>
<accession>Q666C4</accession>
<gene>
    <name evidence="1" type="primary">flgH2</name>
    <name type="ordered locus">YPTB3334</name>
</gene>
<proteinExistence type="inferred from homology"/>
<evidence type="ECO:0000255" key="1">
    <source>
        <dbReference type="HAMAP-Rule" id="MF_00415"/>
    </source>
</evidence>
<organism>
    <name type="scientific">Yersinia pseudotuberculosis serotype I (strain IP32953)</name>
    <dbReference type="NCBI Taxonomy" id="273123"/>
    <lineage>
        <taxon>Bacteria</taxon>
        <taxon>Pseudomonadati</taxon>
        <taxon>Pseudomonadota</taxon>
        <taxon>Gammaproteobacteria</taxon>
        <taxon>Enterobacterales</taxon>
        <taxon>Yersiniaceae</taxon>
        <taxon>Yersinia</taxon>
    </lineage>
</organism>